<sequence>MLALFIHTTGVLSKLLSEAVEAIEPGPVEGIRATGANKLEEILYGVLPQVMPLLISYSLYRFESNVRSATVVGMVGAGGIGVTLWEAIRGFQFQQTCALMVLIIVTVSLLDFLSQRLRKHFI</sequence>
<protein>
    <recommendedName>
        <fullName>Putative cryptic phosphonate transport system permease protein PhnE2</fullName>
    </recommendedName>
</protein>
<organism>
    <name type="scientific">Escherichia coli (strain K12)</name>
    <dbReference type="NCBI Taxonomy" id="83333"/>
    <lineage>
        <taxon>Bacteria</taxon>
        <taxon>Pseudomonadati</taxon>
        <taxon>Pseudomonadota</taxon>
        <taxon>Gammaproteobacteria</taxon>
        <taxon>Enterobacterales</taxon>
        <taxon>Enterobacteriaceae</taxon>
        <taxon>Escherichia</taxon>
    </lineage>
</organism>
<keyword id="KW-0997">Cell inner membrane</keyword>
<keyword id="KW-1003">Cell membrane</keyword>
<keyword id="KW-0472">Membrane</keyword>
<keyword id="KW-0918">Phosphonate transport</keyword>
<keyword id="KW-1185">Reference proteome</keyword>
<keyword id="KW-0812">Transmembrane</keyword>
<keyword id="KW-1133">Transmembrane helix</keyword>
<keyword id="KW-0813">Transport</keyword>
<gene>
    <name type="primary">phnE</name>
    <name evidence="5" type="synonym">phnE2</name>
    <name type="ordered locus">b4103</name>
    <name type="ordered locus">JW4065</name>
</gene>
<accession>P0DP70</accession>
<accession>P16683</accession>
<accession>P76792</accession>
<accession>Q2M6K0</accession>
<accession>Q47479</accession>
<accession>Q47716</accession>
<comment type="function">
    <text evidence="6">C-terminal fragment of the PhnE protein, part of a phosphonate usage operon that is cryptic in K12 strains. Growth of K12 strains on phosphonate can be observed when it is used as the sole phosphorus source after a 60 hour lag period, suggesting the operon is activated (PubMed:2155195). An intact PhnE in strain B is (AC A0A140NFA3). Part of the binding-protein-dependent transport system for phosphonates; probably responsible for the translocation of the substrate across the membrane (Probable).</text>
</comment>
<comment type="subunit">
    <text evidence="5">If the reading frame is restored, the complex is composed of two ATP-binding proteins (PhnC), two transmembrane proteins (PhnE) and a solute-binding protein (PhnD) (Probable).</text>
</comment>
<comment type="subcellular location">
    <subcellularLocation>
        <location evidence="3">Cell inner membrane</location>
        <topology evidence="2 3">Multi-pass membrane protein</topology>
    </subcellularLocation>
    <text evidence="3">In strain K12 / MG1655 when overexpressed using vectors that provide a promoter and ribosome binding site (PubMed:15919996).</text>
</comment>
<comment type="similarity">
    <text evidence="5">Belongs to the binding-protein-dependent transport system permease family.</text>
</comment>
<comment type="caution">
    <text evidence="4">Could be the product of a pseudogene. In K12 strains the phnE gene has an 8-bp insertion, absent from the strain B gene, which causes a frameshift mutation (PubMed:1840580). In 8 K12 derivatives selected for their ability to grow on phosphonate this repeat is no longer present, which restores an intact PhnE open reading frame (PubMed:1840580).</text>
</comment>
<comment type="sequence caution">
    <conflict type="erroneous initiation">
        <sequence resource="EMBL-CDS" id="AAA97002"/>
    </conflict>
    <text>Truncated N-terminus.</text>
</comment>
<comment type="sequence caution">
    <conflict type="erroneous initiation">
        <sequence resource="EMBL-CDS" id="BAA14265"/>
    </conflict>
    <text>Truncated N-terminus.</text>
</comment>
<dbReference type="EMBL" id="D90227">
    <property type="protein sequence ID" value="BAA14265.1"/>
    <property type="status" value="ALT_INIT"/>
    <property type="molecule type" value="Genomic_DNA"/>
</dbReference>
<dbReference type="EMBL" id="U14003">
    <property type="protein sequence ID" value="AAA97002.1"/>
    <property type="status" value="ALT_INIT"/>
    <property type="molecule type" value="Genomic_DNA"/>
</dbReference>
<dbReference type="EMBL" id="U00096">
    <property type="status" value="NOT_ANNOTATED_CDS"/>
    <property type="molecule type" value="Genomic_DNA"/>
</dbReference>
<dbReference type="EMBL" id="AP009048">
    <property type="status" value="NOT_ANNOTATED_CDS"/>
    <property type="molecule type" value="Genomic_DNA"/>
</dbReference>
<dbReference type="PIR" id="F35718">
    <property type="entry name" value="F35718"/>
</dbReference>
<dbReference type="SMR" id="P0DP70"/>
<dbReference type="FunCoup" id="P0DP70">
    <property type="interactions" value="63"/>
</dbReference>
<dbReference type="EchoBASE" id="EB1260"/>
<dbReference type="InParanoid" id="P0DP70"/>
<dbReference type="Proteomes" id="UP000000625">
    <property type="component" value="Chromosome"/>
</dbReference>
<dbReference type="GO" id="GO:0005886">
    <property type="term" value="C:plasma membrane"/>
    <property type="evidence" value="ECO:0007669"/>
    <property type="project" value="UniProtKB-SubCell"/>
</dbReference>
<dbReference type="GO" id="GO:0015716">
    <property type="term" value="P:organic phosphonate transport"/>
    <property type="evidence" value="ECO:0007669"/>
    <property type="project" value="UniProtKB-KW"/>
</dbReference>
<dbReference type="GO" id="GO:0055085">
    <property type="term" value="P:transmembrane transport"/>
    <property type="evidence" value="ECO:0007669"/>
    <property type="project" value="InterPro"/>
</dbReference>
<dbReference type="CDD" id="cd06261">
    <property type="entry name" value="TM_PBP2"/>
    <property type="match status" value="1"/>
</dbReference>
<dbReference type="Gene3D" id="1.10.3720.10">
    <property type="entry name" value="MetI-like"/>
    <property type="match status" value="1"/>
</dbReference>
<dbReference type="InterPro" id="IPR000515">
    <property type="entry name" value="MetI-like"/>
</dbReference>
<dbReference type="InterPro" id="IPR035906">
    <property type="entry name" value="MetI-like_sf"/>
</dbReference>
<dbReference type="PANTHER" id="PTHR30043:SF1">
    <property type="entry name" value="ABC TRANSPORT SYSTEM PERMEASE PROTEIN P69"/>
    <property type="match status" value="1"/>
</dbReference>
<dbReference type="PANTHER" id="PTHR30043">
    <property type="entry name" value="PHOSPHONATES TRANSPORT SYSTEM PERMEASE PROTEIN"/>
    <property type="match status" value="1"/>
</dbReference>
<dbReference type="Pfam" id="PF00528">
    <property type="entry name" value="BPD_transp_1"/>
    <property type="match status" value="1"/>
</dbReference>
<dbReference type="SUPFAM" id="SSF161098">
    <property type="entry name" value="MetI-like"/>
    <property type="match status" value="1"/>
</dbReference>
<dbReference type="PROSITE" id="PS50928">
    <property type="entry name" value="ABC_TM1"/>
    <property type="match status" value="1"/>
</dbReference>
<name>PHNE2_ECOLI</name>
<proteinExistence type="uncertain"/>
<feature type="chain" id="PRO_0000060173" description="Putative cryptic phosphonate transport system permease protein PhnE2">
    <location>
        <begin position="1"/>
        <end position="122"/>
    </location>
</feature>
<feature type="transmembrane region" description="Helical" evidence="2">
    <location>
        <begin position="3"/>
        <end position="23"/>
    </location>
</feature>
<feature type="transmembrane region" description="Helical" evidence="1 2">
    <location>
        <begin position="39"/>
        <end position="59"/>
    </location>
</feature>
<feature type="transmembrane region" description="Helical" evidence="1 2">
    <location>
        <begin position="68"/>
        <end position="88"/>
    </location>
</feature>
<feature type="transmembrane region" description="Helical" evidence="1 2">
    <location>
        <begin position="93"/>
        <end position="113"/>
    </location>
</feature>
<feature type="domain" description="ABC transmembrane type-1" evidence="2">
    <location>
        <begin position="1"/>
        <end position="114"/>
    </location>
</feature>
<reference key="1">
    <citation type="journal article" date="1991" name="J. Bacteriol.">
        <title>Molecular analysis of the cryptic and functional phn operons for phosphonate use in Escherichia coli K-12.</title>
        <authorList>
            <person name="Makino K."/>
            <person name="Kim S.K."/>
            <person name="Shinagawa H."/>
            <person name="Amemura M."/>
            <person name="Nakata A."/>
        </authorList>
    </citation>
    <scope>NUCLEOTIDE SEQUENCE [GENOMIC DNA]</scope>
    <source>
        <strain>K12 / W3110</strain>
    </source>
</reference>
<reference key="2">
    <citation type="journal article" date="1995" name="Nucleic Acids Res.">
        <title>Analysis of the Escherichia coli genome VI: DNA sequence of the region from 92.8 through 100 minutes.</title>
        <authorList>
            <person name="Burland V.D."/>
            <person name="Plunkett G. III"/>
            <person name="Sofia H.J."/>
            <person name="Daniels D.L."/>
            <person name="Blattner F.R."/>
        </authorList>
    </citation>
    <scope>NUCLEOTIDE SEQUENCE [LARGE SCALE GENOMIC DNA]</scope>
    <source>
        <strain>K12 / MG1655 / ATCC 47076</strain>
    </source>
</reference>
<reference key="3">
    <citation type="journal article" date="1997" name="Science">
        <title>The complete genome sequence of Escherichia coli K-12.</title>
        <authorList>
            <person name="Blattner F.R."/>
            <person name="Plunkett G. III"/>
            <person name="Bloch C.A."/>
            <person name="Perna N.T."/>
            <person name="Burland V."/>
            <person name="Riley M."/>
            <person name="Collado-Vides J."/>
            <person name="Glasner J.D."/>
            <person name="Rode C.K."/>
            <person name="Mayhew G.F."/>
            <person name="Gregor J."/>
            <person name="Davis N.W."/>
            <person name="Kirkpatrick H.A."/>
            <person name="Goeden M.A."/>
            <person name="Rose D.J."/>
            <person name="Mau B."/>
            <person name="Shao Y."/>
        </authorList>
    </citation>
    <scope>NUCLEOTIDE SEQUENCE [LARGE SCALE GENOMIC DNA]</scope>
    <source>
        <strain>K12 / MG1655 / ATCC 47076</strain>
    </source>
</reference>
<reference key="4">
    <citation type="journal article" date="2006" name="Mol. Syst. Biol.">
        <title>Highly accurate genome sequences of Escherichia coli K-12 strains MG1655 and W3110.</title>
        <authorList>
            <person name="Hayashi K."/>
            <person name="Morooka N."/>
            <person name="Yamamoto Y."/>
            <person name="Fujita K."/>
            <person name="Isono K."/>
            <person name="Choi S."/>
            <person name="Ohtsubo E."/>
            <person name="Baba T."/>
            <person name="Wanner B.L."/>
            <person name="Mori H."/>
            <person name="Horiuchi T."/>
        </authorList>
    </citation>
    <scope>NUCLEOTIDE SEQUENCE [LARGE SCALE GENOMIC DNA]</scope>
    <source>
        <strain>K12 / W3110 / ATCC 27325 / DSM 5911</strain>
    </source>
</reference>
<reference key="5">
    <citation type="journal article" date="1990" name="J. Bacteriol.">
        <title>Mapping and molecular cloning of the phn (psiD) locus for phosphonate utilization in Escherichia coli.</title>
        <authorList>
            <person name="Wanner B.L."/>
            <person name="Boline J.A."/>
        </authorList>
    </citation>
    <scope>CRYPTIC FUNCTION</scope>
</reference>
<reference key="6">
    <citation type="journal article" date="2005" name="Science">
        <title>Global topology analysis of the Escherichia coli inner membrane proteome.</title>
        <authorList>
            <person name="Daley D.O."/>
            <person name="Rapp M."/>
            <person name="Granseth E."/>
            <person name="Melen K."/>
            <person name="Drew D."/>
            <person name="von Heijne G."/>
        </authorList>
    </citation>
    <scope>SUBCELLULAR LOCATION</scope>
    <source>
        <strain>K12 / MG1655 / ATCC 47076</strain>
    </source>
</reference>
<evidence type="ECO:0000255" key="1"/>
<evidence type="ECO:0000255" key="2">
    <source>
        <dbReference type="PROSITE-ProRule" id="PRU00441"/>
    </source>
</evidence>
<evidence type="ECO:0000269" key="3">
    <source>
    </source>
</evidence>
<evidence type="ECO:0000269" key="4">
    <source>
    </source>
</evidence>
<evidence type="ECO:0000305" key="5"/>
<evidence type="ECO:0000305" key="6">
    <source>
    </source>
</evidence>